<gene>
    <name evidence="1" type="primary">queC</name>
    <name type="ordered locus">RPR_06620</name>
</gene>
<accession>C4K2L7</accession>
<organism>
    <name type="scientific">Rickettsia peacockii (strain Rustic)</name>
    <dbReference type="NCBI Taxonomy" id="562019"/>
    <lineage>
        <taxon>Bacteria</taxon>
        <taxon>Pseudomonadati</taxon>
        <taxon>Pseudomonadota</taxon>
        <taxon>Alphaproteobacteria</taxon>
        <taxon>Rickettsiales</taxon>
        <taxon>Rickettsiaceae</taxon>
        <taxon>Rickettsieae</taxon>
        <taxon>Rickettsia</taxon>
        <taxon>spotted fever group</taxon>
    </lineage>
</organism>
<comment type="function">
    <text evidence="1">Catalyzes the ATP-dependent conversion of 7-carboxy-7-deazaguanine (CDG) to 7-cyano-7-deazaguanine (preQ(0)).</text>
</comment>
<comment type="catalytic activity">
    <reaction evidence="1">
        <text>7-carboxy-7-deazaguanine + NH4(+) + ATP = 7-cyano-7-deazaguanine + ADP + phosphate + H2O + H(+)</text>
        <dbReference type="Rhea" id="RHEA:27982"/>
        <dbReference type="ChEBI" id="CHEBI:15377"/>
        <dbReference type="ChEBI" id="CHEBI:15378"/>
        <dbReference type="ChEBI" id="CHEBI:28938"/>
        <dbReference type="ChEBI" id="CHEBI:30616"/>
        <dbReference type="ChEBI" id="CHEBI:43474"/>
        <dbReference type="ChEBI" id="CHEBI:45075"/>
        <dbReference type="ChEBI" id="CHEBI:61036"/>
        <dbReference type="ChEBI" id="CHEBI:456216"/>
        <dbReference type="EC" id="6.3.4.20"/>
    </reaction>
</comment>
<comment type="cofactor">
    <cofactor evidence="1">
        <name>Zn(2+)</name>
        <dbReference type="ChEBI" id="CHEBI:29105"/>
    </cofactor>
    <text evidence="1">Binds 1 zinc ion per subunit.</text>
</comment>
<comment type="pathway">
    <text evidence="1">Purine metabolism; 7-cyano-7-deazaguanine biosynthesis.</text>
</comment>
<comment type="similarity">
    <text evidence="1">Belongs to the QueC family.</text>
</comment>
<feature type="chain" id="PRO_1000215799" description="7-cyano-7-deazaguanine synthase">
    <location>
        <begin position="1"/>
        <end position="228"/>
    </location>
</feature>
<feature type="binding site" evidence="1">
    <location>
        <begin position="9"/>
        <end position="19"/>
    </location>
    <ligand>
        <name>ATP</name>
        <dbReference type="ChEBI" id="CHEBI:30616"/>
    </ligand>
</feature>
<feature type="binding site" evidence="1">
    <location>
        <position position="193"/>
    </location>
    <ligand>
        <name>Zn(2+)</name>
        <dbReference type="ChEBI" id="CHEBI:29105"/>
    </ligand>
</feature>
<feature type="binding site" evidence="1">
    <location>
        <position position="203"/>
    </location>
    <ligand>
        <name>Zn(2+)</name>
        <dbReference type="ChEBI" id="CHEBI:29105"/>
    </ligand>
</feature>
<feature type="binding site" evidence="1">
    <location>
        <position position="206"/>
    </location>
    <ligand>
        <name>Zn(2+)</name>
        <dbReference type="ChEBI" id="CHEBI:29105"/>
    </ligand>
</feature>
<feature type="binding site" evidence="1">
    <location>
        <position position="209"/>
    </location>
    <ligand>
        <name>Zn(2+)</name>
        <dbReference type="ChEBI" id="CHEBI:29105"/>
    </ligand>
</feature>
<protein>
    <recommendedName>
        <fullName evidence="1">7-cyano-7-deazaguanine synthase</fullName>
        <ecNumber evidence="1">6.3.4.20</ecNumber>
    </recommendedName>
    <alternativeName>
        <fullName evidence="1">7-cyano-7-carbaguanine synthase</fullName>
    </alternativeName>
    <alternativeName>
        <fullName evidence="1">PreQ(0) synthase</fullName>
    </alternativeName>
    <alternativeName>
        <fullName evidence="1">Queuosine biosynthesis protein QueC</fullName>
    </alternativeName>
</protein>
<name>QUEC_RICPU</name>
<evidence type="ECO:0000255" key="1">
    <source>
        <dbReference type="HAMAP-Rule" id="MF_01633"/>
    </source>
</evidence>
<reference key="1">
    <citation type="journal article" date="2009" name="PLoS ONE">
        <title>Genome sequence of the endosymbiont Rickettsia peacockii and comparison with virulent Rickettsia rickettsii: identification of virulence factors.</title>
        <authorList>
            <person name="Felsheim R.F."/>
            <person name="Kurtti T.J."/>
            <person name="Munderloh U.G."/>
        </authorList>
    </citation>
    <scope>NUCLEOTIDE SEQUENCE [LARGE SCALE GENOMIC DNA]</scope>
    <source>
        <strain>Rustic</strain>
    </source>
</reference>
<sequence length="228" mass="25515">MKKKAVILLSGGPDSTTVLEIVSKTDYEIYALSFNYHRRNSLEVQKIQGLIKDYNVKQHRVINIDLQSFIGSALTDDNIDVPKFKNTDQLPSDIPVTYVPARNTIFLSYALGVVEVIGARDIFIGVHTNDYTNYPDCRPEYIKSFEAMANLATRVGVNGEKITIHAPLINMTKEQIIKKGLELGVDYSKTISCYDPTEDGLSCGQCLSCIARLDAFKKNNVQDPIKYV</sequence>
<dbReference type="EC" id="6.3.4.20" evidence="1"/>
<dbReference type="EMBL" id="CP001227">
    <property type="protein sequence ID" value="ACR47814.1"/>
    <property type="molecule type" value="Genomic_DNA"/>
</dbReference>
<dbReference type="RefSeq" id="WP_012736982.1">
    <property type="nucleotide sequence ID" value="NC_012730.1"/>
</dbReference>
<dbReference type="SMR" id="C4K2L7"/>
<dbReference type="KEGG" id="rpk:RPR_06620"/>
<dbReference type="HOGENOM" id="CLU_081854_1_1_5"/>
<dbReference type="UniPathway" id="UPA00391"/>
<dbReference type="Proteomes" id="UP000005015">
    <property type="component" value="Chromosome"/>
</dbReference>
<dbReference type="GO" id="GO:0005524">
    <property type="term" value="F:ATP binding"/>
    <property type="evidence" value="ECO:0007669"/>
    <property type="project" value="UniProtKB-UniRule"/>
</dbReference>
<dbReference type="GO" id="GO:0016879">
    <property type="term" value="F:ligase activity, forming carbon-nitrogen bonds"/>
    <property type="evidence" value="ECO:0007669"/>
    <property type="project" value="UniProtKB-UniRule"/>
</dbReference>
<dbReference type="GO" id="GO:0008270">
    <property type="term" value="F:zinc ion binding"/>
    <property type="evidence" value="ECO:0007669"/>
    <property type="project" value="UniProtKB-UniRule"/>
</dbReference>
<dbReference type="GO" id="GO:0008616">
    <property type="term" value="P:queuosine biosynthetic process"/>
    <property type="evidence" value="ECO:0007669"/>
    <property type="project" value="UniProtKB-UniRule"/>
</dbReference>
<dbReference type="CDD" id="cd01995">
    <property type="entry name" value="QueC-like"/>
    <property type="match status" value="1"/>
</dbReference>
<dbReference type="Gene3D" id="3.40.50.620">
    <property type="entry name" value="HUPs"/>
    <property type="match status" value="1"/>
</dbReference>
<dbReference type="HAMAP" id="MF_01633">
    <property type="entry name" value="QueC"/>
    <property type="match status" value="1"/>
</dbReference>
<dbReference type="InterPro" id="IPR018317">
    <property type="entry name" value="QueC"/>
</dbReference>
<dbReference type="InterPro" id="IPR014729">
    <property type="entry name" value="Rossmann-like_a/b/a_fold"/>
</dbReference>
<dbReference type="NCBIfam" id="TIGR00364">
    <property type="entry name" value="7-cyano-7-deazaguanine synthase QueC"/>
    <property type="match status" value="1"/>
</dbReference>
<dbReference type="PANTHER" id="PTHR42914">
    <property type="entry name" value="7-CYANO-7-DEAZAGUANINE SYNTHASE"/>
    <property type="match status" value="1"/>
</dbReference>
<dbReference type="PANTHER" id="PTHR42914:SF1">
    <property type="entry name" value="7-CYANO-7-DEAZAGUANINE SYNTHASE"/>
    <property type="match status" value="1"/>
</dbReference>
<dbReference type="Pfam" id="PF06508">
    <property type="entry name" value="QueC"/>
    <property type="match status" value="1"/>
</dbReference>
<dbReference type="PIRSF" id="PIRSF006293">
    <property type="entry name" value="ExsB"/>
    <property type="match status" value="1"/>
</dbReference>
<dbReference type="SUPFAM" id="SSF52402">
    <property type="entry name" value="Adenine nucleotide alpha hydrolases-like"/>
    <property type="match status" value="1"/>
</dbReference>
<proteinExistence type="inferred from homology"/>
<keyword id="KW-0067">ATP-binding</keyword>
<keyword id="KW-0436">Ligase</keyword>
<keyword id="KW-0479">Metal-binding</keyword>
<keyword id="KW-0547">Nucleotide-binding</keyword>
<keyword id="KW-0671">Queuosine biosynthesis</keyword>
<keyword id="KW-0862">Zinc</keyword>